<organism>
    <name type="scientific">Xenopus tropicalis</name>
    <name type="common">Western clawed frog</name>
    <name type="synonym">Silurana tropicalis</name>
    <dbReference type="NCBI Taxonomy" id="8364"/>
    <lineage>
        <taxon>Eukaryota</taxon>
        <taxon>Metazoa</taxon>
        <taxon>Chordata</taxon>
        <taxon>Craniata</taxon>
        <taxon>Vertebrata</taxon>
        <taxon>Euteleostomi</taxon>
        <taxon>Amphibia</taxon>
        <taxon>Batrachia</taxon>
        <taxon>Anura</taxon>
        <taxon>Pipoidea</taxon>
        <taxon>Pipidae</taxon>
        <taxon>Xenopodinae</taxon>
        <taxon>Xenopus</taxon>
        <taxon>Silurana</taxon>
    </lineage>
</organism>
<feature type="chain" id="PRO_0000365944" description="Ragulator complex protein LAMTOR2">
    <location>
        <begin position="1"/>
        <end position="125"/>
    </location>
</feature>
<feature type="region of interest" description="Required for location at endosomes" evidence="1">
    <location>
        <begin position="57"/>
        <end position="70"/>
    </location>
</feature>
<sequence>MLRPKALTQVLSQANTGGVQSTLLLNNEGSLLAYSGYGDTDARVTAAIASNIWAAYDKNGHQAFNEDNLKFILMDCMEGRVAITRVSNLLLCMYAKETVGFGMLKAKAQALVYYLEESLNQVSSS</sequence>
<name>LTOR2_XENTR</name>
<proteinExistence type="evidence at transcript level"/>
<accession>Q6DF40</accession>
<protein>
    <recommendedName>
        <fullName>Ragulator complex protein LAMTOR2</fullName>
    </recommendedName>
    <alternativeName>
        <fullName>Late endosomal/lysosomal adaptor and MAPK and MTOR activator 2</fullName>
    </alternativeName>
    <alternativeName>
        <fullName>Roadblock domain-containing protein 3</fullName>
    </alternativeName>
</protein>
<reference key="1">
    <citation type="submission" date="2004-07" db="EMBL/GenBank/DDBJ databases">
        <authorList>
            <consortium name="NIH - Xenopus Gene Collection (XGC) project"/>
        </authorList>
    </citation>
    <scope>NUCLEOTIDE SEQUENCE [LARGE SCALE MRNA]</scope>
</reference>
<keyword id="KW-0967">Endosome</keyword>
<keyword id="KW-0458">Lysosome</keyword>
<keyword id="KW-0472">Membrane</keyword>
<keyword id="KW-1185">Reference proteome</keyword>
<evidence type="ECO:0000250" key="1"/>
<evidence type="ECO:0000250" key="2">
    <source>
        <dbReference type="UniProtKB" id="Q9JHS3"/>
    </source>
</evidence>
<evidence type="ECO:0000250" key="3">
    <source>
        <dbReference type="UniProtKB" id="Q9Y2Q5"/>
    </source>
</evidence>
<evidence type="ECO:0000305" key="4"/>
<comment type="function">
    <text evidence="3">As part of the Ragulator complex it is involved in amino acid sensing and activation of mTORC1, a signaling complex promoting cell growth in response to growth factors, energy levels, and amino acids. Activated by amino acids through a mechanism involving the lysosomal V-ATPase, the Ragulator plays a dual role for the small GTPases Rag (RagA/RRAGA, RagB/RRAGB, RagC/RRAGC and/or RagD/RRAGD): it (1) acts as a guanine nucleotide exchange factor (GEF), activating the small GTPases Rag and (2) mediates recruitment of Rag GTPases to the lysosome membrane. Activated Ragulator and Rag GTPases function as a scaffold recruiting mTORC1 to lysosomes where it is in turn activated.</text>
</comment>
<comment type="subunit">
    <text evidence="3">Part of the Ragulator complex composed of lamtor1, lamtor2, lamtor3, lamtor4 and lamtor5. The Ragulator complex interacts with slc38a9; the probable amino acid sensor. Component of the lysosomal folliculin complex (LFC).</text>
</comment>
<comment type="subcellular location">
    <subcellularLocation>
        <location evidence="2">Late endosome membrane</location>
        <topology evidence="2">Peripheral membrane protein</topology>
        <orientation evidence="2">Cytoplasmic side</orientation>
    </subcellularLocation>
    <subcellularLocation>
        <location evidence="2">Lysosome membrane</location>
        <topology evidence="2">Peripheral membrane protein</topology>
        <orientation evidence="2">Cytoplasmic side</orientation>
    </subcellularLocation>
    <text evidence="2">Recruited to lysosome and endosome membranes by LAMTOR1.</text>
</comment>
<comment type="similarity">
    <text evidence="4">Belongs to the GAMAD family.</text>
</comment>
<gene>
    <name type="primary">lamtor2</name>
    <name type="synonym">robld3</name>
</gene>
<dbReference type="EMBL" id="BC076903">
    <property type="protein sequence ID" value="AAH76903.1"/>
    <property type="molecule type" value="mRNA"/>
</dbReference>
<dbReference type="RefSeq" id="NP_001005040.1">
    <property type="nucleotide sequence ID" value="NM_001005040.1"/>
</dbReference>
<dbReference type="SMR" id="Q6DF40"/>
<dbReference type="FunCoup" id="Q6DF40">
    <property type="interactions" value="779"/>
</dbReference>
<dbReference type="STRING" id="8364.ENSXETP00000042434"/>
<dbReference type="PaxDb" id="8364-ENSXETP00000044018"/>
<dbReference type="DNASU" id="448570"/>
<dbReference type="GeneID" id="448570"/>
<dbReference type="KEGG" id="xtr:448570"/>
<dbReference type="AGR" id="Xenbase:XB-GENE-992364"/>
<dbReference type="CTD" id="28956"/>
<dbReference type="Xenbase" id="XB-GENE-992364">
    <property type="gene designation" value="lamtor2"/>
</dbReference>
<dbReference type="eggNOG" id="KOG4107">
    <property type="taxonomic scope" value="Eukaryota"/>
</dbReference>
<dbReference type="InParanoid" id="Q6DF40"/>
<dbReference type="OMA" id="WAAYEKN"/>
<dbReference type="OrthoDB" id="271745at2759"/>
<dbReference type="Reactome" id="R-XTR-1632852">
    <property type="pathway name" value="Macroautophagy"/>
</dbReference>
<dbReference type="Reactome" id="R-XTR-165159">
    <property type="pathway name" value="MTOR signalling"/>
</dbReference>
<dbReference type="Reactome" id="R-XTR-380972">
    <property type="pathway name" value="Energy dependent regulation of mTOR by LKB1-AMPK"/>
</dbReference>
<dbReference type="Reactome" id="R-XTR-5628897">
    <property type="pathway name" value="TP53 Regulates Metabolic Genes"/>
</dbReference>
<dbReference type="Reactome" id="R-XTR-6798695">
    <property type="pathway name" value="Neutrophil degranulation"/>
</dbReference>
<dbReference type="Reactome" id="R-XTR-9639288">
    <property type="pathway name" value="Amino acids regulate mTORC1"/>
</dbReference>
<dbReference type="Proteomes" id="UP000008143">
    <property type="component" value="Chromosome 8"/>
</dbReference>
<dbReference type="GO" id="GO:0005770">
    <property type="term" value="C:late endosome"/>
    <property type="evidence" value="ECO:0000250"/>
    <property type="project" value="UniProtKB"/>
</dbReference>
<dbReference type="GO" id="GO:0031902">
    <property type="term" value="C:late endosome membrane"/>
    <property type="evidence" value="ECO:0007669"/>
    <property type="project" value="UniProtKB-SubCell"/>
</dbReference>
<dbReference type="GO" id="GO:0005765">
    <property type="term" value="C:lysosomal membrane"/>
    <property type="evidence" value="ECO:0000250"/>
    <property type="project" value="UniProtKB"/>
</dbReference>
<dbReference type="GO" id="GO:0071986">
    <property type="term" value="C:Ragulator complex"/>
    <property type="evidence" value="ECO:0000250"/>
    <property type="project" value="UniProtKB"/>
</dbReference>
<dbReference type="GO" id="GO:0005085">
    <property type="term" value="F:guanyl-nucleotide exchange factor activity"/>
    <property type="evidence" value="ECO:0007669"/>
    <property type="project" value="InterPro"/>
</dbReference>
<dbReference type="GO" id="GO:0060090">
    <property type="term" value="F:molecular adaptor activity"/>
    <property type="evidence" value="ECO:0007669"/>
    <property type="project" value="InterPro"/>
</dbReference>
<dbReference type="GO" id="GO:0071230">
    <property type="term" value="P:cellular response to amino acid stimulus"/>
    <property type="evidence" value="ECO:0000250"/>
    <property type="project" value="UniProtKB"/>
</dbReference>
<dbReference type="GO" id="GO:0032008">
    <property type="term" value="P:positive regulation of TOR signaling"/>
    <property type="evidence" value="ECO:0000250"/>
    <property type="project" value="UniProtKB"/>
</dbReference>
<dbReference type="GO" id="GO:1904263">
    <property type="term" value="P:positive regulation of TORC1 signaling"/>
    <property type="evidence" value="ECO:0000250"/>
    <property type="project" value="UniProtKB"/>
</dbReference>
<dbReference type="GO" id="GO:0008104">
    <property type="term" value="P:protein localization"/>
    <property type="evidence" value="ECO:0000250"/>
    <property type="project" value="UniProtKB"/>
</dbReference>
<dbReference type="GO" id="GO:0001558">
    <property type="term" value="P:regulation of cell growth"/>
    <property type="evidence" value="ECO:0000250"/>
    <property type="project" value="UniProtKB"/>
</dbReference>
<dbReference type="FunFam" id="3.30.450.30:FF:000004">
    <property type="entry name" value="ragulator complex protein LAMTOR2"/>
    <property type="match status" value="1"/>
</dbReference>
<dbReference type="Gene3D" id="3.30.450.30">
    <property type="entry name" value="Dynein light chain 2a, cytoplasmic"/>
    <property type="match status" value="1"/>
</dbReference>
<dbReference type="InterPro" id="IPR037587">
    <property type="entry name" value="LAMTOR2-like"/>
</dbReference>
<dbReference type="InterPro" id="IPR004942">
    <property type="entry name" value="Roadblock/LAMTOR2_dom"/>
</dbReference>
<dbReference type="PANTHER" id="PTHR13323">
    <property type="entry name" value="LATE ENDOSOMAL/LYSOSOMAL MP1 INTERACTING PROTEIN"/>
    <property type="match status" value="1"/>
</dbReference>
<dbReference type="Pfam" id="PF03259">
    <property type="entry name" value="Robl_LC7"/>
    <property type="match status" value="1"/>
</dbReference>
<dbReference type="SMART" id="SM00960">
    <property type="entry name" value="Robl_LC7"/>
    <property type="match status" value="1"/>
</dbReference>
<dbReference type="SUPFAM" id="SSF103196">
    <property type="entry name" value="Roadblock/LC7 domain"/>
    <property type="match status" value="1"/>
</dbReference>